<organism>
    <name type="scientific">Paenarthrobacter aurescens (strain TC1)</name>
    <dbReference type="NCBI Taxonomy" id="290340"/>
    <lineage>
        <taxon>Bacteria</taxon>
        <taxon>Bacillati</taxon>
        <taxon>Actinomycetota</taxon>
        <taxon>Actinomycetes</taxon>
        <taxon>Micrococcales</taxon>
        <taxon>Micrococcaceae</taxon>
        <taxon>Paenarthrobacter</taxon>
    </lineage>
</organism>
<keyword id="KW-0687">Ribonucleoprotein</keyword>
<keyword id="KW-0689">Ribosomal protein</keyword>
<protein>
    <recommendedName>
        <fullName evidence="1">Large ribosomal subunit protein bL33</fullName>
    </recommendedName>
    <alternativeName>
        <fullName evidence="2">50S ribosomal protein L33</fullName>
    </alternativeName>
</protein>
<gene>
    <name evidence="1" type="primary">rpmG</name>
    <name type="ordered locus">AAur_3755</name>
</gene>
<proteinExistence type="inferred from homology"/>
<name>RL33_PAEAT</name>
<evidence type="ECO:0000255" key="1">
    <source>
        <dbReference type="HAMAP-Rule" id="MF_00294"/>
    </source>
</evidence>
<evidence type="ECO:0000305" key="2"/>
<accession>A1RB23</accession>
<reference key="1">
    <citation type="journal article" date="2006" name="PLoS Genet.">
        <title>Secrets of soil survival revealed by the genome sequence of Arthrobacter aurescens TC1.</title>
        <authorList>
            <person name="Mongodin E.F."/>
            <person name="Shapir N."/>
            <person name="Daugherty S.C."/>
            <person name="DeBoy R.T."/>
            <person name="Emerson J.B."/>
            <person name="Shvartzbeyn A."/>
            <person name="Radune D."/>
            <person name="Vamathevan J."/>
            <person name="Riggs F."/>
            <person name="Grinberg V."/>
            <person name="Khouri H.M."/>
            <person name="Wackett L.P."/>
            <person name="Nelson K.E."/>
            <person name="Sadowsky M.J."/>
        </authorList>
    </citation>
    <scope>NUCLEOTIDE SEQUENCE [LARGE SCALE GENOMIC DNA]</scope>
    <source>
        <strain>TC1</strain>
    </source>
</reference>
<comment type="similarity">
    <text evidence="1">Belongs to the bacterial ribosomal protein bL33 family.</text>
</comment>
<dbReference type="EMBL" id="CP000474">
    <property type="protein sequence ID" value="ABM10093.1"/>
    <property type="molecule type" value="Genomic_DNA"/>
</dbReference>
<dbReference type="RefSeq" id="WP_003798558.1">
    <property type="nucleotide sequence ID" value="NC_008711.1"/>
</dbReference>
<dbReference type="SMR" id="A1RB23"/>
<dbReference type="STRING" id="290340.AAur_3755"/>
<dbReference type="GeneID" id="97302623"/>
<dbReference type="KEGG" id="aau:AAur_3755"/>
<dbReference type="eggNOG" id="COG0267">
    <property type="taxonomic scope" value="Bacteria"/>
</dbReference>
<dbReference type="HOGENOM" id="CLU_190949_1_1_11"/>
<dbReference type="OrthoDB" id="21586at2"/>
<dbReference type="Proteomes" id="UP000000637">
    <property type="component" value="Chromosome"/>
</dbReference>
<dbReference type="GO" id="GO:0022625">
    <property type="term" value="C:cytosolic large ribosomal subunit"/>
    <property type="evidence" value="ECO:0007669"/>
    <property type="project" value="TreeGrafter"/>
</dbReference>
<dbReference type="GO" id="GO:0003735">
    <property type="term" value="F:structural constituent of ribosome"/>
    <property type="evidence" value="ECO:0007669"/>
    <property type="project" value="InterPro"/>
</dbReference>
<dbReference type="GO" id="GO:0006412">
    <property type="term" value="P:translation"/>
    <property type="evidence" value="ECO:0007669"/>
    <property type="project" value="UniProtKB-UniRule"/>
</dbReference>
<dbReference type="FunFam" id="2.20.28.120:FF:000002">
    <property type="entry name" value="50S ribosomal protein L33"/>
    <property type="match status" value="1"/>
</dbReference>
<dbReference type="Gene3D" id="2.20.28.120">
    <property type="entry name" value="Ribosomal protein L33"/>
    <property type="match status" value="1"/>
</dbReference>
<dbReference type="HAMAP" id="MF_00294">
    <property type="entry name" value="Ribosomal_bL33"/>
    <property type="match status" value="1"/>
</dbReference>
<dbReference type="InterPro" id="IPR001705">
    <property type="entry name" value="Ribosomal_bL33"/>
</dbReference>
<dbReference type="InterPro" id="IPR018264">
    <property type="entry name" value="Ribosomal_bL33_CS"/>
</dbReference>
<dbReference type="InterPro" id="IPR038584">
    <property type="entry name" value="Ribosomal_bL33_sf"/>
</dbReference>
<dbReference type="InterPro" id="IPR011332">
    <property type="entry name" value="Ribosomal_zn-bd"/>
</dbReference>
<dbReference type="NCBIfam" id="NF001860">
    <property type="entry name" value="PRK00595.1"/>
    <property type="match status" value="1"/>
</dbReference>
<dbReference type="NCBIfam" id="TIGR01023">
    <property type="entry name" value="rpmG_bact"/>
    <property type="match status" value="1"/>
</dbReference>
<dbReference type="PANTHER" id="PTHR15238">
    <property type="entry name" value="54S RIBOSOMAL PROTEIN L39, MITOCHONDRIAL"/>
    <property type="match status" value="1"/>
</dbReference>
<dbReference type="PANTHER" id="PTHR15238:SF1">
    <property type="entry name" value="LARGE RIBOSOMAL SUBUNIT PROTEIN BL33M"/>
    <property type="match status" value="1"/>
</dbReference>
<dbReference type="Pfam" id="PF00471">
    <property type="entry name" value="Ribosomal_L33"/>
    <property type="match status" value="1"/>
</dbReference>
<dbReference type="SUPFAM" id="SSF57829">
    <property type="entry name" value="Zn-binding ribosomal proteins"/>
    <property type="match status" value="1"/>
</dbReference>
<dbReference type="PROSITE" id="PS00582">
    <property type="entry name" value="RIBOSOMAL_L33"/>
    <property type="match status" value="1"/>
</dbReference>
<feature type="chain" id="PRO_1000004141" description="Large ribosomal subunit protein bL33">
    <location>
        <begin position="1"/>
        <end position="55"/>
    </location>
</feature>
<sequence>MAKDKDVRPIIKLKSTAGTGYTYVTRKNRRNDPDRLVLKKYDPKIRQHVEFREER</sequence>